<proteinExistence type="evidence at protein level"/>
<reference key="1">
    <citation type="journal article" date="1997" name="Nature">
        <title>The nucleotide sequence of Saccharomyces cerevisiae chromosome XIII.</title>
        <authorList>
            <person name="Bowman S."/>
            <person name="Churcher C.M."/>
            <person name="Badcock K."/>
            <person name="Brown D."/>
            <person name="Chillingworth T."/>
            <person name="Connor R."/>
            <person name="Dedman K."/>
            <person name="Devlin K."/>
            <person name="Gentles S."/>
            <person name="Hamlin N."/>
            <person name="Hunt S."/>
            <person name="Jagels K."/>
            <person name="Lye G."/>
            <person name="Moule S."/>
            <person name="Odell C."/>
            <person name="Pearson D."/>
            <person name="Rajandream M.A."/>
            <person name="Rice P."/>
            <person name="Skelton J."/>
            <person name="Walsh S.V."/>
            <person name="Whitehead S."/>
            <person name="Barrell B.G."/>
        </authorList>
    </citation>
    <scope>NUCLEOTIDE SEQUENCE [LARGE SCALE GENOMIC DNA]</scope>
    <source>
        <strain>ATCC 204508 / S288c</strain>
    </source>
</reference>
<reference key="2">
    <citation type="journal article" date="2014" name="G3 (Bethesda)">
        <title>The reference genome sequence of Saccharomyces cerevisiae: Then and now.</title>
        <authorList>
            <person name="Engel S.R."/>
            <person name="Dietrich F.S."/>
            <person name="Fisk D.G."/>
            <person name="Binkley G."/>
            <person name="Balakrishnan R."/>
            <person name="Costanzo M.C."/>
            <person name="Dwight S.S."/>
            <person name="Hitz B.C."/>
            <person name="Karra K."/>
            <person name="Nash R.S."/>
            <person name="Weng S."/>
            <person name="Wong E.D."/>
            <person name="Lloyd P."/>
            <person name="Skrzypek M.S."/>
            <person name="Miyasato S.R."/>
            <person name="Simison M."/>
            <person name="Cherry J.M."/>
        </authorList>
    </citation>
    <scope>GENOME REANNOTATION</scope>
    <source>
        <strain>ATCC 204508 / S288c</strain>
    </source>
</reference>
<reference key="3">
    <citation type="journal article" date="2003" name="Mol. Biol. Cell">
        <title>Catabolite degradation of fructose-1,6-bisphosphatase in the yeast Saccharomyces cerevisiae: a genome-wide screen identifies eight novel GID genes and indicates the existence of two degradation pathways.</title>
        <authorList>
            <person name="Regelmann J."/>
            <person name="Schuele T."/>
            <person name="Josupeit F.S."/>
            <person name="Horak J."/>
            <person name="Rose M."/>
            <person name="Entian K.-D."/>
            <person name="Thumm M."/>
            <person name="Wolf D.H."/>
        </authorList>
    </citation>
    <scope>FUNCTION</scope>
</reference>
<reference key="4">
    <citation type="journal article" date="2003" name="Nature">
        <title>Global analysis of protein localization in budding yeast.</title>
        <authorList>
            <person name="Huh W.-K."/>
            <person name="Falvo J.V."/>
            <person name="Gerke L.C."/>
            <person name="Carroll A.S."/>
            <person name="Howson R.W."/>
            <person name="Weissman J.S."/>
            <person name="O'Shea E.K."/>
        </authorList>
    </citation>
    <scope>SUBCELLULAR LOCATION [LARGE SCALE ANALYSIS]</scope>
</reference>
<reference key="5">
    <citation type="journal article" date="2003" name="Nature">
        <title>Global analysis of protein expression in yeast.</title>
        <authorList>
            <person name="Ghaemmaghami S."/>
            <person name="Huh W.-K."/>
            <person name="Bower K."/>
            <person name="Howson R.W."/>
            <person name="Belle A."/>
            <person name="Dephoure N."/>
            <person name="O'Shea E.K."/>
            <person name="Weissman J.S."/>
        </authorList>
    </citation>
    <scope>LEVEL OF PROTEIN EXPRESSION [LARGE SCALE ANALYSIS]</scope>
</reference>
<reference key="6">
    <citation type="journal article" date="2004" name="Eukaryot. Cell">
        <title>Gid8p (Dcr1p) and Dcr2p function in a common pathway to promote START completion in Saccharomyces cerevisiae.</title>
        <authorList>
            <person name="Pathak R."/>
            <person name="Bogomolnaya L.M."/>
            <person name="Guo J."/>
            <person name="Polymenis M."/>
        </authorList>
    </citation>
    <scope>FUNCTION</scope>
</reference>
<reference key="7">
    <citation type="journal article" date="2006" name="BMC Bioinformatics">
        <title>PIPE: a protein-protein interaction prediction engine based on the re-occurring short polypeptide sequences between known interacting protein pairs.</title>
        <authorList>
            <person name="Pitre S."/>
            <person name="Dehne F."/>
            <person name="Chan A."/>
            <person name="Cheetham J."/>
            <person name="Duong A."/>
            <person name="Emili A."/>
            <person name="Gebbia M."/>
            <person name="Greenblatt J."/>
            <person name="Jessulat M."/>
            <person name="Krogan N."/>
            <person name="Luo X."/>
            <person name="Golshani A."/>
        </authorList>
    </citation>
    <scope>IDENTIFICATION IN GID COMPLEX</scope>
</reference>
<reference key="8">
    <citation type="journal article" date="2008" name="Mol. Biol. Cell">
        <title>The yeast GID complex, a novel ubiquitin ligase (E3) involved in the regulation of carbohydrate metabolism.</title>
        <authorList>
            <person name="Santt O."/>
            <person name="Pfirrmann T."/>
            <person name="Braun B."/>
            <person name="Juretschke J."/>
            <person name="Kimmig P."/>
            <person name="Scheel H."/>
            <person name="Hofmann K."/>
            <person name="Thumm M."/>
            <person name="Wolf D.H."/>
        </authorList>
    </citation>
    <scope>IDENTIFICATION IN GID COMPLEX</scope>
</reference>
<reference key="9">
    <citation type="journal article" date="2009" name="Science">
        <title>Global analysis of Cdk1 substrate phosphorylation sites provides insights into evolution.</title>
        <authorList>
            <person name="Holt L.J."/>
            <person name="Tuch B.B."/>
            <person name="Villen J."/>
            <person name="Johnson A.D."/>
            <person name="Gygi S.P."/>
            <person name="Morgan D.O."/>
        </authorList>
    </citation>
    <scope>IDENTIFICATION BY MASS SPECTROMETRY [LARGE SCALE ANALYSIS]</scope>
</reference>
<reference key="10">
    <citation type="journal article" date="2012" name="J. Biol. Chem.">
        <title>Exploring the topology of the Gid complex, the E3 ubiquitin ligase involved in catabolite-induced degradation of gluconeogenic enzymes.</title>
        <authorList>
            <person name="Menssen R."/>
            <person name="Schweiggert J."/>
            <person name="Schreiner J."/>
            <person name="Kusevic D."/>
            <person name="Reuther J."/>
            <person name="Braun B."/>
            <person name="Wolf D.H."/>
        </authorList>
    </citation>
    <scope>SUBUNIT</scope>
    <scope>INTERACTION WITH VID30 AND FYV10</scope>
</reference>
<reference evidence="17" key="11">
    <citation type="journal article" date="2020" name="Mol. Cell">
        <title>Interconversion between anticipatory and active GID E3 ubiquitin ligase conformations via metabolically driven substrate receptor assembly.</title>
        <authorList>
            <person name="Qiao S."/>
            <person name="Langlois C.R."/>
            <person name="Chrustowicz J."/>
            <person name="Sherpa D."/>
            <person name="Karayel O."/>
            <person name="Hansen F.M."/>
            <person name="Beier V."/>
            <person name="von Gronau S."/>
            <person name="Bollschweiler D."/>
            <person name="Schafer T."/>
            <person name="Alpi A.F."/>
            <person name="Mann M."/>
            <person name="Prabu J.R."/>
            <person name="Schulman B.A."/>
        </authorList>
    </citation>
    <scope>STRUCTURE BY ELECTRON MICROSCOPY (3.20 ANGSTROMS)</scope>
</reference>
<reference evidence="18 19" key="12">
    <citation type="journal article" date="2021" name="Mol. Cell">
        <title>GID E3 ligase supramolecular chelate assembly configures multipronged ubiquitin targeting of an oligomeric metabolic enzyme.</title>
        <authorList>
            <person name="Sherpa D."/>
            <person name="Chrustowicz J."/>
            <person name="Qiao S."/>
            <person name="Langlois C.R."/>
            <person name="Hehl L.A."/>
            <person name="Gottemukkala K.V."/>
            <person name="Hansen F.M."/>
            <person name="Karayel O."/>
            <person name="von Gronau S."/>
            <person name="Prabu J.R."/>
            <person name="Mann M."/>
            <person name="Alpi A.F."/>
            <person name="Schulman B.A."/>
        </authorList>
    </citation>
    <scope>STRUCTURE BY ELECTRON MICROSCOPY (3.50 ANGSTROMS)</scope>
</reference>
<reference evidence="20" key="13">
    <citation type="journal article" date="2022" name="Nat. Commun.">
        <title>Cryo-EM structures of Gid12-bound GID E3 reveal steric blockade as a mechanism inhibiting substrate ubiquitylation.</title>
        <authorList>
            <person name="Qiao S."/>
            <person name="Lee C.W."/>
            <person name="Sherpa D."/>
            <person name="Chrustowicz J."/>
            <person name="Cheng J."/>
            <person name="Duennebacke M."/>
            <person name="Steigenberger B."/>
            <person name="Karayel O."/>
            <person name="Vu D.T."/>
            <person name="von Gronau S."/>
            <person name="Mann M."/>
            <person name="Wilfling F."/>
            <person name="Schulman B.A."/>
        </authorList>
    </citation>
    <scope>STRUCTURE BY ELECTRON MICROSCOPY (3.30 ANGSTROMS)</scope>
</reference>
<accession>P40208</accession>
<accession>D6VZV8</accession>
<keyword id="KW-0002">3D-structure</keyword>
<keyword id="KW-0131">Cell cycle</keyword>
<keyword id="KW-0963">Cytoplasm</keyword>
<keyword id="KW-0539">Nucleus</keyword>
<keyword id="KW-1185">Reference proteome</keyword>
<keyword id="KW-0833">Ubl conjugation pathway</keyword>
<comment type="function">
    <text evidence="4 7 10 11">Component of the GID E3 ligase complex recruiting N termini and catalyzing ubiquitination of proteins targeted for degradation. GID E3 is regulated through assembly with interchangeable N-degron-binding substrate receptors induced by distinct environmental perturbations (PubMed:12686616, PubMed:31708416). Required for the adaptation to the presence of glucose in the growth medium; mediates in association with the substrate receptor VID24/GID4 the degradation of enzymes involved in gluconeogenesis when cells are shifted to glucose-containing medium (PubMed:12686616, PubMed:31708416). Required for proteasome-dependent catabolite degradation of fructose-1,6-bisphosphatase (FBP1), malate dehydrogenase (MDH2), and other gluconeogenic enzymes (PubMed:12686616, PubMed:22645139). Required also for cell cycle progression. Positively controls G1 and the timing of START (PubMed:15590836).</text>
</comment>
<comment type="subunit">
    <text evidence="8 9 10 11 12">Identified in the GID/CTLH complex (PubMed:16872538, PubMed:18508925). In the absence of stress, the complex exists as an inactive anticipatory complex (GID(Ant)), composed of VID30/GID1, the E3 ubiquitin-ligase RMD5/GID2, VID28/GID5, GID8, and the RING-like subunit FYV10/GID9, awaiting a substrate receptor to form the active E3 ligase complex. When cells are shifted to glucose-containing medium, the substrate receptor VID24/GID4 is induced and becomes part of the complex, named GID(SR4) (PubMed:18508925, PubMed:22645139, PubMed:31708416). Additionally, GID7 transforms the GID(SR4) E3 ligase core into a higher-order supramolecular assembly (Chelator-GID(SR4)) specifically tailored for FBP1 ubiquitination (PubMed:33905682). Under osmotic or heat stress, the substrate receptor GID10 is induced and becomes part of the complex, named GID(SR10) (PubMed:31708416). Within the GID complex, interacts directly with VID30/GID1, RMD5/GID2 and FYV10/GID9 (PubMed:22645139).</text>
</comment>
<comment type="interaction">
    <interactant intactId="EBI-27276">
        <id>P40208</id>
    </interactant>
    <interactant intactId="EBI-21727">
        <id>P25569</id>
        <label>GID7</label>
    </interactant>
    <organismsDiffer>false</organismsDiffer>
    <experiments>3</experiments>
</comment>
<comment type="interaction">
    <interactant intactId="EBI-27276">
        <id>P40208</id>
    </interactant>
    <interactant intactId="EBI-24173">
        <id>P53076</id>
        <label>VID30</label>
    </interactant>
    <organismsDiffer>false</organismsDiffer>
    <experiments>15</experiments>
</comment>
<comment type="subcellular location">
    <subcellularLocation>
        <location evidence="5">Nucleus</location>
    </subcellularLocation>
    <subcellularLocation>
        <location evidence="5">Cytoplasm</location>
    </subcellularLocation>
</comment>
<comment type="miscellaneous">
    <text evidence="6">Present with 639 molecules/cell in log phase SD medium.</text>
</comment>
<comment type="similarity">
    <text evidence="15">Belongs to the GID8 family.</text>
</comment>
<evidence type="ECO:0000255" key="1">
    <source>
        <dbReference type="PROSITE-ProRule" id="PRU00058"/>
    </source>
</evidence>
<evidence type="ECO:0000255" key="2">
    <source>
        <dbReference type="PROSITE-ProRule" id="PRU00126"/>
    </source>
</evidence>
<evidence type="ECO:0000256" key="3">
    <source>
        <dbReference type="SAM" id="MobiDB-lite"/>
    </source>
</evidence>
<evidence type="ECO:0000269" key="4">
    <source>
    </source>
</evidence>
<evidence type="ECO:0000269" key="5">
    <source>
    </source>
</evidence>
<evidence type="ECO:0000269" key="6">
    <source>
    </source>
</evidence>
<evidence type="ECO:0000269" key="7">
    <source>
    </source>
</evidence>
<evidence type="ECO:0000269" key="8">
    <source>
    </source>
</evidence>
<evidence type="ECO:0000269" key="9">
    <source>
    </source>
</evidence>
<evidence type="ECO:0000269" key="10">
    <source>
    </source>
</evidence>
<evidence type="ECO:0000269" key="11">
    <source>
    </source>
</evidence>
<evidence type="ECO:0000269" key="12">
    <source>
    </source>
</evidence>
<evidence type="ECO:0000303" key="13">
    <source>
    </source>
</evidence>
<evidence type="ECO:0000303" key="14">
    <source>
    </source>
</evidence>
<evidence type="ECO:0000305" key="15"/>
<evidence type="ECO:0000312" key="16">
    <source>
        <dbReference type="SGD" id="S000004742"/>
    </source>
</evidence>
<evidence type="ECO:0007744" key="17">
    <source>
        <dbReference type="PDB" id="6SWY"/>
    </source>
</evidence>
<evidence type="ECO:0007744" key="18">
    <source>
        <dbReference type="PDB" id="7NS3"/>
    </source>
</evidence>
<evidence type="ECO:0007744" key="19">
    <source>
        <dbReference type="PDB" id="7NSB"/>
    </source>
</evidence>
<evidence type="ECO:0007744" key="20">
    <source>
        <dbReference type="PDB" id="7WUG"/>
    </source>
</evidence>
<evidence type="ECO:0007829" key="21">
    <source>
        <dbReference type="PDB" id="6SWY"/>
    </source>
</evidence>
<evidence type="ECO:0007829" key="22">
    <source>
        <dbReference type="PDB" id="7WUG"/>
    </source>
</evidence>
<feature type="chain" id="PRO_0000087486" description="GID complex subunit 8">
    <location>
        <begin position="1"/>
        <end position="455"/>
    </location>
</feature>
<feature type="domain" description="LisH" evidence="2">
    <location>
        <begin position="85"/>
        <end position="117"/>
    </location>
</feature>
<feature type="domain" description="CTLH" evidence="1">
    <location>
        <begin position="130"/>
        <end position="213"/>
    </location>
</feature>
<feature type="region of interest" description="Disordered" evidence="3">
    <location>
        <begin position="1"/>
        <end position="21"/>
    </location>
</feature>
<feature type="compositionally biased region" description="Polar residues" evidence="3">
    <location>
        <begin position="1"/>
        <end position="19"/>
    </location>
</feature>
<feature type="strand" evidence="21">
    <location>
        <begin position="31"/>
        <end position="33"/>
    </location>
</feature>
<feature type="helix" evidence="21">
    <location>
        <begin position="36"/>
        <end position="52"/>
    </location>
</feature>
<feature type="helix" evidence="21">
    <location>
        <begin position="89"/>
        <end position="99"/>
    </location>
</feature>
<feature type="helix" evidence="21">
    <location>
        <begin position="103"/>
        <end position="113"/>
    </location>
</feature>
<feature type="helix" evidence="21">
    <location>
        <begin position="119"/>
        <end position="129"/>
    </location>
</feature>
<feature type="helix" evidence="21">
    <location>
        <begin position="131"/>
        <end position="142"/>
    </location>
</feature>
<feature type="helix" evidence="21">
    <location>
        <begin position="146"/>
        <end position="156"/>
    </location>
</feature>
<feature type="helix" evidence="22">
    <location>
        <begin position="160"/>
        <end position="163"/>
    </location>
</feature>
<feature type="helix" evidence="21">
    <location>
        <begin position="193"/>
        <end position="210"/>
    </location>
</feature>
<feature type="helix" evidence="21">
    <location>
        <begin position="221"/>
        <end position="233"/>
    </location>
</feature>
<feature type="helix" evidence="21">
    <location>
        <begin position="235"/>
        <end position="239"/>
    </location>
</feature>
<feature type="helix" evidence="21">
    <location>
        <begin position="243"/>
        <end position="256"/>
    </location>
</feature>
<feature type="helix" evidence="21">
    <location>
        <begin position="274"/>
        <end position="277"/>
    </location>
</feature>
<feature type="helix" evidence="21">
    <location>
        <begin position="281"/>
        <end position="307"/>
    </location>
</feature>
<feature type="turn" evidence="21">
    <location>
        <begin position="308"/>
        <end position="310"/>
    </location>
</feature>
<feature type="strand" evidence="21">
    <location>
        <begin position="316"/>
        <end position="318"/>
    </location>
</feature>
<feature type="strand" evidence="22">
    <location>
        <begin position="320"/>
        <end position="322"/>
    </location>
</feature>
<feature type="strand" evidence="21">
    <location>
        <begin position="333"/>
        <end position="338"/>
    </location>
</feature>
<feature type="helix" evidence="21">
    <location>
        <begin position="353"/>
        <end position="355"/>
    </location>
</feature>
<feature type="helix" evidence="21">
    <location>
        <begin position="395"/>
        <end position="400"/>
    </location>
</feature>
<feature type="helix" evidence="21">
    <location>
        <begin position="418"/>
        <end position="422"/>
    </location>
</feature>
<feature type="helix" evidence="22">
    <location>
        <begin position="423"/>
        <end position="425"/>
    </location>
</feature>
<feature type="helix" evidence="21">
    <location>
        <begin position="428"/>
        <end position="445"/>
    </location>
</feature>
<sequence>MTISTLSNETTKSGSCSGQGKNGGKDFTYGKKCFTKEEWKEQVAKYSAMGELYANKTIHYPLKIQPNSSGGSQDEGFATIQTTPIEPTLPRLLLNYFVSMAYEDSSIRMAKELGFIRNNKDIAVFNDLYKIKERFHIKHLIKLGRINEAMEEINSIFGLEVLEETFNATGSYTGRTDRQQQQQQQQFDIDGDLHFKLLLLNLIEMIRSHHQQENITKDSNDFILNLIQYSQNKLAIKASSSVKKMQELELAMTLLLFPLSDSADSGSIKLPKSLQNLYSISLRSKIADLVNEKLLKFIHPRIQFEISNNNSKFPDLLNSDKKIITQNFTVYNNNLVNGSNGTKITHISSDQPINEKMSSNEVTAAANSVWLNQRDGNVGTGSAATTFHNLENKNYWNQTSELLSSSNGKEKGLEFNNYYSSEFPYEPRLTQIMKLWCWCENQLHHNQIGVPRVEN</sequence>
<gene>
    <name evidence="13" type="primary">GID8</name>
    <name evidence="14" type="synonym">DCR1</name>
    <name evidence="16" type="ordered locus">YMR135C</name>
    <name type="ORF">YM9375.04C</name>
</gene>
<dbReference type="EMBL" id="Z47071">
    <property type="protein sequence ID" value="CAA87349.1"/>
    <property type="molecule type" value="Genomic_DNA"/>
</dbReference>
<dbReference type="EMBL" id="BK006946">
    <property type="protein sequence ID" value="DAA10032.1"/>
    <property type="molecule type" value="Genomic_DNA"/>
</dbReference>
<dbReference type="PIR" id="S50391">
    <property type="entry name" value="S50391"/>
</dbReference>
<dbReference type="RefSeq" id="NP_013854.1">
    <property type="nucleotide sequence ID" value="NM_001182636.1"/>
</dbReference>
<dbReference type="PDB" id="6SWY">
    <property type="method" value="EM"/>
    <property type="resolution" value="3.20 A"/>
    <property type="chains" value="8=1-455"/>
</dbReference>
<dbReference type="PDB" id="7NS3">
    <property type="method" value="EM"/>
    <property type="resolution" value="3.50 A"/>
    <property type="chains" value="8=1-455"/>
</dbReference>
<dbReference type="PDB" id="7NSB">
    <property type="method" value="EM"/>
    <property type="resolution" value="3.70 A"/>
    <property type="chains" value="h=1-455"/>
</dbReference>
<dbReference type="PDB" id="7WUG">
    <property type="method" value="EM"/>
    <property type="resolution" value="3.30 A"/>
    <property type="chains" value="8=1-455"/>
</dbReference>
<dbReference type="PDBsum" id="6SWY"/>
<dbReference type="PDBsum" id="7NS3"/>
<dbReference type="PDBsum" id="7NSB"/>
<dbReference type="PDBsum" id="7WUG"/>
<dbReference type="EMDB" id="EMD-10333"/>
<dbReference type="EMDB" id="EMD-12559"/>
<dbReference type="EMDB" id="EMD-12563"/>
<dbReference type="EMDB" id="EMD-32830"/>
<dbReference type="SMR" id="P40208"/>
<dbReference type="BioGRID" id="35312">
    <property type="interactions" value="147"/>
</dbReference>
<dbReference type="ComplexPortal" id="CPX-301">
    <property type="entry name" value="GID E3 ubiquitin ligase complex, GID4 variant"/>
</dbReference>
<dbReference type="ComplexPortal" id="CPX-7884">
    <property type="entry name" value="GID E3 ubiquitin ligase complex, GID10 variant"/>
</dbReference>
<dbReference type="ComplexPortal" id="CPX-7885">
    <property type="entry name" value="GID E3 ubiquitin ligase complex, GID11 variant"/>
</dbReference>
<dbReference type="DIP" id="DIP-6457N"/>
<dbReference type="FunCoup" id="P40208">
    <property type="interactions" value="411"/>
</dbReference>
<dbReference type="IntAct" id="P40208">
    <property type="interactions" value="11"/>
</dbReference>
<dbReference type="MINT" id="P40208"/>
<dbReference type="STRING" id="4932.YMR135C"/>
<dbReference type="iPTMnet" id="P40208"/>
<dbReference type="PaxDb" id="4932-YMR135C"/>
<dbReference type="PeptideAtlas" id="P40208"/>
<dbReference type="EnsemblFungi" id="YMR135C_mRNA">
    <property type="protein sequence ID" value="YMR135C"/>
    <property type="gene ID" value="YMR135C"/>
</dbReference>
<dbReference type="GeneID" id="855166"/>
<dbReference type="KEGG" id="sce:YMR135C"/>
<dbReference type="AGR" id="SGD:S000004742"/>
<dbReference type="SGD" id="S000004742">
    <property type="gene designation" value="GID8"/>
</dbReference>
<dbReference type="VEuPathDB" id="FungiDB:YMR135C"/>
<dbReference type="eggNOG" id="KOG2659">
    <property type="taxonomic scope" value="Eukaryota"/>
</dbReference>
<dbReference type="HOGENOM" id="CLU_055870_0_0_1"/>
<dbReference type="InParanoid" id="P40208"/>
<dbReference type="OMA" id="LWCWCEN"/>
<dbReference type="OrthoDB" id="2415936at2759"/>
<dbReference type="BioCyc" id="YEAST:G3O-32828-MONOMER"/>
<dbReference type="Reactome" id="R-SCE-9861718">
    <property type="pathway name" value="Regulation of pyruvate metabolism"/>
</dbReference>
<dbReference type="BioGRID-ORCS" id="855166">
    <property type="hits" value="8 hits in 10 CRISPR screens"/>
</dbReference>
<dbReference type="PHI-base" id="PHI:6193"/>
<dbReference type="PRO" id="PR:P40208"/>
<dbReference type="Proteomes" id="UP000002311">
    <property type="component" value="Chromosome XIII"/>
</dbReference>
<dbReference type="RNAct" id="P40208">
    <property type="molecule type" value="protein"/>
</dbReference>
<dbReference type="GO" id="GO:0005737">
    <property type="term" value="C:cytoplasm"/>
    <property type="evidence" value="ECO:0007005"/>
    <property type="project" value="SGD"/>
</dbReference>
<dbReference type="GO" id="GO:0034657">
    <property type="term" value="C:GID complex"/>
    <property type="evidence" value="ECO:0000314"/>
    <property type="project" value="SGD"/>
</dbReference>
<dbReference type="GO" id="GO:0005634">
    <property type="term" value="C:nucleus"/>
    <property type="evidence" value="ECO:0007005"/>
    <property type="project" value="SGD"/>
</dbReference>
<dbReference type="GO" id="GO:0045721">
    <property type="term" value="P:negative regulation of gluconeogenesis"/>
    <property type="evidence" value="ECO:0000315"/>
    <property type="project" value="SGD"/>
</dbReference>
<dbReference type="GO" id="GO:0043161">
    <property type="term" value="P:proteasome-mediated ubiquitin-dependent protein catabolic process"/>
    <property type="evidence" value="ECO:0000315"/>
    <property type="project" value="SGD"/>
</dbReference>
<dbReference type="GO" id="GO:0007089">
    <property type="term" value="P:traversing start control point of mitotic cell cycle"/>
    <property type="evidence" value="ECO:0000315"/>
    <property type="project" value="SGD"/>
</dbReference>
<dbReference type="InterPro" id="IPR013144">
    <property type="entry name" value="CRA_dom"/>
</dbReference>
<dbReference type="InterPro" id="IPR024964">
    <property type="entry name" value="CTLH/CRA"/>
</dbReference>
<dbReference type="InterPro" id="IPR006595">
    <property type="entry name" value="CTLH_C"/>
</dbReference>
<dbReference type="InterPro" id="IPR050618">
    <property type="entry name" value="Ubq-SigPath_Reg"/>
</dbReference>
<dbReference type="PANTHER" id="PTHR12864">
    <property type="entry name" value="RAN BINDING PROTEIN 9-RELATED"/>
    <property type="match status" value="1"/>
</dbReference>
<dbReference type="Pfam" id="PF10607">
    <property type="entry name" value="CTLH"/>
    <property type="match status" value="1"/>
</dbReference>
<dbReference type="SMART" id="SM00757">
    <property type="entry name" value="CRA"/>
    <property type="match status" value="1"/>
</dbReference>
<dbReference type="SMART" id="SM00668">
    <property type="entry name" value="CTLH"/>
    <property type="match status" value="1"/>
</dbReference>
<dbReference type="PROSITE" id="PS50897">
    <property type="entry name" value="CTLH"/>
    <property type="match status" value="1"/>
</dbReference>
<organism>
    <name type="scientific">Saccharomyces cerevisiae (strain ATCC 204508 / S288c)</name>
    <name type="common">Baker's yeast</name>
    <dbReference type="NCBI Taxonomy" id="559292"/>
    <lineage>
        <taxon>Eukaryota</taxon>
        <taxon>Fungi</taxon>
        <taxon>Dikarya</taxon>
        <taxon>Ascomycota</taxon>
        <taxon>Saccharomycotina</taxon>
        <taxon>Saccharomycetes</taxon>
        <taxon>Saccharomycetales</taxon>
        <taxon>Saccharomycetaceae</taxon>
        <taxon>Saccharomyces</taxon>
    </lineage>
</organism>
<protein>
    <recommendedName>
        <fullName evidence="15">GID complex subunit 8</fullName>
    </recommendedName>
    <alternativeName>
        <fullName evidence="14">Dosage-dependent cell cycle regulator 1</fullName>
    </alternativeName>
    <alternativeName>
        <fullName evidence="13">Glucose-induced degradation protein 8</fullName>
    </alternativeName>
</protein>
<name>GID8_YEAST</name>